<feature type="chain" id="PRO_1000114170" description="Porphobilinogen deaminase">
    <location>
        <begin position="1"/>
        <end position="312"/>
    </location>
</feature>
<feature type="modified residue" description="S-(dipyrrolylmethanemethyl)cysteine" evidence="1">
    <location>
        <position position="241"/>
    </location>
</feature>
<comment type="function">
    <text evidence="1">Tetrapolymerization of the monopyrrole PBG into the hydroxymethylbilane pre-uroporphyrinogen in several discrete steps.</text>
</comment>
<comment type="catalytic activity">
    <reaction evidence="1">
        <text>4 porphobilinogen + H2O = hydroxymethylbilane + 4 NH4(+)</text>
        <dbReference type="Rhea" id="RHEA:13185"/>
        <dbReference type="ChEBI" id="CHEBI:15377"/>
        <dbReference type="ChEBI" id="CHEBI:28938"/>
        <dbReference type="ChEBI" id="CHEBI:57845"/>
        <dbReference type="ChEBI" id="CHEBI:58126"/>
        <dbReference type="EC" id="2.5.1.61"/>
    </reaction>
</comment>
<comment type="cofactor">
    <cofactor evidence="1">
        <name>dipyrromethane</name>
        <dbReference type="ChEBI" id="CHEBI:60342"/>
    </cofactor>
    <text evidence="1">Binds 1 dipyrromethane group covalently.</text>
</comment>
<comment type="pathway">
    <text evidence="1">Porphyrin-containing compound metabolism; protoporphyrin-IX biosynthesis; coproporphyrinogen-III from 5-aminolevulinate: step 2/4.</text>
</comment>
<comment type="pathway">
    <text evidence="1">Porphyrin-containing compound metabolism; chlorophyll biosynthesis.</text>
</comment>
<comment type="subunit">
    <text evidence="1">Monomer.</text>
</comment>
<comment type="miscellaneous">
    <text evidence="1">The porphobilinogen subunits are added to the dipyrromethane group.</text>
</comment>
<comment type="similarity">
    <text evidence="1">Belongs to the HMBS family.</text>
</comment>
<accession>B4S922</accession>
<gene>
    <name evidence="1" type="primary">hemC</name>
    <name type="ordered locus">Paes_1539</name>
</gene>
<keyword id="KW-0149">Chlorophyll biosynthesis</keyword>
<keyword id="KW-0627">Porphyrin biosynthesis</keyword>
<keyword id="KW-0808">Transferase</keyword>
<dbReference type="EC" id="2.5.1.61" evidence="1"/>
<dbReference type="EMBL" id="CP001108">
    <property type="protein sequence ID" value="ACF46559.1"/>
    <property type="molecule type" value="Genomic_DNA"/>
</dbReference>
<dbReference type="RefSeq" id="WP_012506092.1">
    <property type="nucleotide sequence ID" value="NC_011059.1"/>
</dbReference>
<dbReference type="SMR" id="B4S922"/>
<dbReference type="STRING" id="290512.Paes_1539"/>
<dbReference type="KEGG" id="paa:Paes_1539"/>
<dbReference type="eggNOG" id="COG0181">
    <property type="taxonomic scope" value="Bacteria"/>
</dbReference>
<dbReference type="HOGENOM" id="CLU_019704_0_2_10"/>
<dbReference type="UniPathway" id="UPA00251">
    <property type="reaction ID" value="UER00319"/>
</dbReference>
<dbReference type="UniPathway" id="UPA00668"/>
<dbReference type="Proteomes" id="UP000002725">
    <property type="component" value="Chromosome"/>
</dbReference>
<dbReference type="GO" id="GO:0005737">
    <property type="term" value="C:cytoplasm"/>
    <property type="evidence" value="ECO:0007669"/>
    <property type="project" value="TreeGrafter"/>
</dbReference>
<dbReference type="GO" id="GO:0004418">
    <property type="term" value="F:hydroxymethylbilane synthase activity"/>
    <property type="evidence" value="ECO:0007669"/>
    <property type="project" value="UniProtKB-UniRule"/>
</dbReference>
<dbReference type="GO" id="GO:0015995">
    <property type="term" value="P:chlorophyll biosynthetic process"/>
    <property type="evidence" value="ECO:0007669"/>
    <property type="project" value="UniProtKB-UniRule"/>
</dbReference>
<dbReference type="GO" id="GO:0006782">
    <property type="term" value="P:protoporphyrinogen IX biosynthetic process"/>
    <property type="evidence" value="ECO:0007669"/>
    <property type="project" value="UniProtKB-UniRule"/>
</dbReference>
<dbReference type="CDD" id="cd13646">
    <property type="entry name" value="PBP2_EcHMBS_like"/>
    <property type="match status" value="1"/>
</dbReference>
<dbReference type="FunFam" id="3.30.160.40:FF:000002">
    <property type="entry name" value="Porphobilinogen deaminase"/>
    <property type="match status" value="1"/>
</dbReference>
<dbReference type="FunFam" id="3.40.190.10:FF:000004">
    <property type="entry name" value="Porphobilinogen deaminase"/>
    <property type="match status" value="1"/>
</dbReference>
<dbReference type="FunFam" id="3.40.190.10:FF:000005">
    <property type="entry name" value="Porphobilinogen deaminase"/>
    <property type="match status" value="1"/>
</dbReference>
<dbReference type="Gene3D" id="3.40.190.10">
    <property type="entry name" value="Periplasmic binding protein-like II"/>
    <property type="match status" value="2"/>
</dbReference>
<dbReference type="Gene3D" id="3.30.160.40">
    <property type="entry name" value="Porphobilinogen deaminase, C-terminal domain"/>
    <property type="match status" value="1"/>
</dbReference>
<dbReference type="HAMAP" id="MF_00260">
    <property type="entry name" value="Porphobil_deam"/>
    <property type="match status" value="1"/>
</dbReference>
<dbReference type="InterPro" id="IPR000860">
    <property type="entry name" value="HemC"/>
</dbReference>
<dbReference type="InterPro" id="IPR022419">
    <property type="entry name" value="Porphobilin_deaminase_cofac_BS"/>
</dbReference>
<dbReference type="InterPro" id="IPR022417">
    <property type="entry name" value="Porphobilin_deaminase_N"/>
</dbReference>
<dbReference type="InterPro" id="IPR022418">
    <property type="entry name" value="Porphobilinogen_deaminase_C"/>
</dbReference>
<dbReference type="InterPro" id="IPR036803">
    <property type="entry name" value="Porphobilinogen_deaminase_C_sf"/>
</dbReference>
<dbReference type="NCBIfam" id="TIGR00212">
    <property type="entry name" value="hemC"/>
    <property type="match status" value="1"/>
</dbReference>
<dbReference type="PANTHER" id="PTHR11557">
    <property type="entry name" value="PORPHOBILINOGEN DEAMINASE"/>
    <property type="match status" value="1"/>
</dbReference>
<dbReference type="PANTHER" id="PTHR11557:SF0">
    <property type="entry name" value="PORPHOBILINOGEN DEAMINASE"/>
    <property type="match status" value="1"/>
</dbReference>
<dbReference type="Pfam" id="PF01379">
    <property type="entry name" value="Porphobil_deam"/>
    <property type="match status" value="1"/>
</dbReference>
<dbReference type="Pfam" id="PF03900">
    <property type="entry name" value="Porphobil_deamC"/>
    <property type="match status" value="1"/>
</dbReference>
<dbReference type="PIRSF" id="PIRSF001438">
    <property type="entry name" value="4pyrrol_synth_OHMeBilane_synth"/>
    <property type="match status" value="1"/>
</dbReference>
<dbReference type="PRINTS" id="PR00151">
    <property type="entry name" value="PORPHBDMNASE"/>
</dbReference>
<dbReference type="SUPFAM" id="SSF53850">
    <property type="entry name" value="Periplasmic binding protein-like II"/>
    <property type="match status" value="1"/>
</dbReference>
<dbReference type="SUPFAM" id="SSF54782">
    <property type="entry name" value="Porphobilinogen deaminase (hydroxymethylbilane synthase), C-terminal domain"/>
    <property type="match status" value="1"/>
</dbReference>
<dbReference type="PROSITE" id="PS00533">
    <property type="entry name" value="PORPHOBILINOGEN_DEAM"/>
    <property type="match status" value="1"/>
</dbReference>
<name>HEM3_PROA2</name>
<proteinExistence type="inferred from homology"/>
<sequence>MKQQLIIGTRSSPLALWQAEFTKAELSKNFPELDIQLKLIKTTGDVLLDSPLSKIGDMGLFTKDIEKHLLAKEIDLAVHSLKDVPTETPEGLILSAFTEREDTRDVIISKNGDNLKQLKPNAKIATSSLRRTSQLLGIRPDFEMGDIRGNLNTRFKRFDESDFDAMILAYAGVHRLNFGDRISEILPHDVLLPAVGQGALGIETRIDDEQTRQIVKVMNNQNSEYCTKAERALLRHLQGGCQIPIGAYATYKNGTLHLSAFVGSVDGKRAIRNEITKENVTAPELAEKTGIELAEELMKQGANEILAEIRKI</sequence>
<evidence type="ECO:0000255" key="1">
    <source>
        <dbReference type="HAMAP-Rule" id="MF_00260"/>
    </source>
</evidence>
<organism>
    <name type="scientific">Prosthecochloris aestuarii (strain DSM 271 / SK 413)</name>
    <dbReference type="NCBI Taxonomy" id="290512"/>
    <lineage>
        <taxon>Bacteria</taxon>
        <taxon>Pseudomonadati</taxon>
        <taxon>Chlorobiota</taxon>
        <taxon>Chlorobiia</taxon>
        <taxon>Chlorobiales</taxon>
        <taxon>Chlorobiaceae</taxon>
        <taxon>Prosthecochloris</taxon>
    </lineage>
</organism>
<reference key="1">
    <citation type="submission" date="2008-06" db="EMBL/GenBank/DDBJ databases">
        <title>Complete sequence of chromosome of Prosthecochloris aestuarii DSM 271.</title>
        <authorList>
            <consortium name="US DOE Joint Genome Institute"/>
            <person name="Lucas S."/>
            <person name="Copeland A."/>
            <person name="Lapidus A."/>
            <person name="Glavina del Rio T."/>
            <person name="Dalin E."/>
            <person name="Tice H."/>
            <person name="Bruce D."/>
            <person name="Goodwin L."/>
            <person name="Pitluck S."/>
            <person name="Schmutz J."/>
            <person name="Larimer F."/>
            <person name="Land M."/>
            <person name="Hauser L."/>
            <person name="Kyrpides N."/>
            <person name="Anderson I."/>
            <person name="Liu Z."/>
            <person name="Li T."/>
            <person name="Zhao F."/>
            <person name="Overmann J."/>
            <person name="Bryant D.A."/>
            <person name="Richardson P."/>
        </authorList>
    </citation>
    <scope>NUCLEOTIDE SEQUENCE [LARGE SCALE GENOMIC DNA]</scope>
    <source>
        <strain>DSM 271 / SK 413</strain>
    </source>
</reference>
<protein>
    <recommendedName>
        <fullName evidence="1">Porphobilinogen deaminase</fullName>
        <shortName evidence="1">PBG</shortName>
        <ecNumber evidence="1">2.5.1.61</ecNumber>
    </recommendedName>
    <alternativeName>
        <fullName evidence="1">Hydroxymethylbilane synthase</fullName>
        <shortName evidence="1">HMBS</shortName>
    </alternativeName>
    <alternativeName>
        <fullName evidence="1">Pre-uroporphyrinogen synthase</fullName>
    </alternativeName>
</protein>